<dbReference type="EMBL" id="X15497">
    <property type="protein sequence ID" value="CAA33520.1"/>
    <property type="molecule type" value="mRNA"/>
</dbReference>
<dbReference type="EMBL" id="X62285">
    <property type="protein sequence ID" value="CAA44173.1"/>
    <property type="molecule type" value="Genomic_DNA"/>
</dbReference>
<dbReference type="EMBL" id="AE014134">
    <property type="protein sequence ID" value="AAF52875.1"/>
    <property type="molecule type" value="Genomic_DNA"/>
</dbReference>
<dbReference type="EMBL" id="AY071178">
    <property type="protein sequence ID" value="AAL48800.1"/>
    <property type="molecule type" value="mRNA"/>
</dbReference>
<dbReference type="PIR" id="S23450">
    <property type="entry name" value="SNFF5K"/>
</dbReference>
<dbReference type="RefSeq" id="NP_001285798.1">
    <property type="nucleotide sequence ID" value="NM_001298869.1"/>
</dbReference>
<dbReference type="RefSeq" id="NP_523532.1">
    <property type="nucleotide sequence ID" value="NM_078808.4"/>
</dbReference>
<dbReference type="SMR" id="P12881"/>
<dbReference type="BioGRID" id="60450">
    <property type="interactions" value="54"/>
</dbReference>
<dbReference type="ComplexPortal" id="CPX-9070">
    <property type="entry name" value="26S proteasome complex"/>
</dbReference>
<dbReference type="DIP" id="DIP-22159N"/>
<dbReference type="FunCoup" id="P12881">
    <property type="interactions" value="2345"/>
</dbReference>
<dbReference type="IntAct" id="P12881">
    <property type="interactions" value="179"/>
</dbReference>
<dbReference type="MINT" id="P12881"/>
<dbReference type="STRING" id="7227.FBpp0310201"/>
<dbReference type="GlyGen" id="P12881">
    <property type="glycosylation" value="1 site"/>
</dbReference>
<dbReference type="PaxDb" id="7227-FBpp0079538"/>
<dbReference type="EnsemblMetazoa" id="FBtr0079948">
    <property type="protein sequence ID" value="FBpp0079538"/>
    <property type="gene ID" value="FBgn0250843"/>
</dbReference>
<dbReference type="EnsemblMetazoa" id="FBtr0343606">
    <property type="protein sequence ID" value="FBpp0310201"/>
    <property type="gene ID" value="FBgn0250843"/>
</dbReference>
<dbReference type="GeneID" id="34359"/>
<dbReference type="KEGG" id="dme:Dmel_CG4904"/>
<dbReference type="AGR" id="FB:FBgn0250843"/>
<dbReference type="CTD" id="34359"/>
<dbReference type="FlyBase" id="FBgn0250843">
    <property type="gene designation" value="Prosalpha6"/>
</dbReference>
<dbReference type="VEuPathDB" id="VectorBase:FBgn0250843"/>
<dbReference type="eggNOG" id="KOG0863">
    <property type="taxonomic scope" value="Eukaryota"/>
</dbReference>
<dbReference type="GeneTree" id="ENSGT00550000074855"/>
<dbReference type="HOGENOM" id="CLU_035750_8_0_1"/>
<dbReference type="InParanoid" id="P12881"/>
<dbReference type="OMA" id="NTQVYGK"/>
<dbReference type="OrthoDB" id="431557at2759"/>
<dbReference type="PhylomeDB" id="P12881"/>
<dbReference type="Reactome" id="R-DME-1169091">
    <property type="pathway name" value="Activation of NF-kappaB in B cells"/>
</dbReference>
<dbReference type="Reactome" id="R-DME-1234176">
    <property type="pathway name" value="Oxygen-dependent proline hydroxylation of Hypoxia-inducible Factor Alpha"/>
</dbReference>
<dbReference type="Reactome" id="R-DME-1236978">
    <property type="pathway name" value="Cross-presentation of soluble exogenous antigens (endosomes)"/>
</dbReference>
<dbReference type="Reactome" id="R-DME-174084">
    <property type="pathway name" value="Autodegradation of Cdh1 by Cdh1:APC/C"/>
</dbReference>
<dbReference type="Reactome" id="R-DME-174154">
    <property type="pathway name" value="APC/C:Cdc20 mediated degradation of Securin"/>
</dbReference>
<dbReference type="Reactome" id="R-DME-174178">
    <property type="pathway name" value="APC/C:Cdh1 mediated degradation of Cdc20 and other APC/C:Cdh1 targeted proteins in late mitosis/early G1"/>
</dbReference>
<dbReference type="Reactome" id="R-DME-174184">
    <property type="pathway name" value="Cdc20:Phospho-APC/C mediated degradation of Cyclin A"/>
</dbReference>
<dbReference type="Reactome" id="R-DME-187577">
    <property type="pathway name" value="SCF(Skp2)-mediated degradation of p27/p21"/>
</dbReference>
<dbReference type="Reactome" id="R-DME-195253">
    <property type="pathway name" value="Degradation of beta-catenin by the destruction complex"/>
</dbReference>
<dbReference type="Reactome" id="R-DME-202424">
    <property type="pathway name" value="Downstream TCR signaling"/>
</dbReference>
<dbReference type="Reactome" id="R-DME-209360">
    <property type="pathway name" value="Ubiquitination and proteolysis of phosphorylated CI"/>
</dbReference>
<dbReference type="Reactome" id="R-DME-209406">
    <property type="pathway name" value="Degradation of NF-kappa-B inhibitor, CACT"/>
</dbReference>
<dbReference type="Reactome" id="R-DME-209461">
    <property type="pathway name" value="Ubiquitination and degradation of phosphorylated ARM"/>
</dbReference>
<dbReference type="Reactome" id="R-DME-216167">
    <property type="pathway name" value="Nuclear CI is degraded"/>
</dbReference>
<dbReference type="Reactome" id="R-DME-2467813">
    <property type="pathway name" value="Separation of Sister Chromatids"/>
</dbReference>
<dbReference type="Reactome" id="R-DME-2871837">
    <property type="pathway name" value="FCERI mediated NF-kB activation"/>
</dbReference>
<dbReference type="Reactome" id="R-DME-350562">
    <property type="pathway name" value="Regulation of ornithine decarboxylase (ODC)"/>
</dbReference>
<dbReference type="Reactome" id="R-DME-382556">
    <property type="pathway name" value="ABC-family proteins mediated transport"/>
</dbReference>
<dbReference type="Reactome" id="R-DME-432395">
    <property type="pathway name" value="Degradation of TIM"/>
</dbReference>
<dbReference type="Reactome" id="R-DME-432524">
    <property type="pathway name" value="Degradation of PER"/>
</dbReference>
<dbReference type="Reactome" id="R-DME-432626">
    <property type="pathway name" value="Circadian Clock pathway"/>
</dbReference>
<dbReference type="Reactome" id="R-DME-450408">
    <property type="pathway name" value="AUF1 (hnRNP D0) binds and destabilizes mRNA"/>
</dbReference>
<dbReference type="Reactome" id="R-DME-4608870">
    <property type="pathway name" value="Asymmetric localization of PCP proteins"/>
</dbReference>
<dbReference type="Reactome" id="R-DME-4641257">
    <property type="pathway name" value="Degradation of AXIN"/>
</dbReference>
<dbReference type="Reactome" id="R-DME-4641258">
    <property type="pathway name" value="Degradation of DVL"/>
</dbReference>
<dbReference type="Reactome" id="R-DME-5358346">
    <property type="pathway name" value="Hedgehog ligand biogenesis"/>
</dbReference>
<dbReference type="Reactome" id="R-DME-538864">
    <property type="pathway name" value="Degradation of CRY"/>
</dbReference>
<dbReference type="Reactome" id="R-DME-5607761">
    <property type="pathway name" value="Dectin-1 mediated noncanonical NF-kB signaling"/>
</dbReference>
<dbReference type="Reactome" id="R-DME-5607764">
    <property type="pathway name" value="CLEC7A (Dectin-1) signaling"/>
</dbReference>
<dbReference type="Reactome" id="R-DME-5610780">
    <property type="pathway name" value="Degradation of GLI1 by the proteasome"/>
</dbReference>
<dbReference type="Reactome" id="R-DME-5610785">
    <property type="pathway name" value="GLI3 is processed to GLI3R by the proteasome"/>
</dbReference>
<dbReference type="Reactome" id="R-DME-5632684">
    <property type="pathway name" value="Hedgehog 'on' state"/>
</dbReference>
<dbReference type="Reactome" id="R-DME-5658442">
    <property type="pathway name" value="Regulation of RAS by GAPs"/>
</dbReference>
<dbReference type="Reactome" id="R-DME-5676590">
    <property type="pathway name" value="NIK--&gt;noncanonical NF-kB signaling"/>
</dbReference>
<dbReference type="Reactome" id="R-DME-5689603">
    <property type="pathway name" value="UCH proteinases"/>
</dbReference>
<dbReference type="Reactome" id="R-DME-5689880">
    <property type="pathway name" value="Ub-specific processing proteases"/>
</dbReference>
<dbReference type="Reactome" id="R-DME-68949">
    <property type="pathway name" value="Orc1 removal from chromatin"/>
</dbReference>
<dbReference type="Reactome" id="R-DME-69017">
    <property type="pathway name" value="CDK-mediated phosphorylation and removal of Cdc6"/>
</dbReference>
<dbReference type="Reactome" id="R-DME-69601">
    <property type="pathway name" value="Ubiquitin Mediated Degradation of Phosphorylated Cdc25A"/>
</dbReference>
<dbReference type="Reactome" id="R-DME-75815">
    <property type="pathway name" value="Ubiquitin-dependent degradation of Cyclin D"/>
</dbReference>
<dbReference type="Reactome" id="R-DME-8854050">
    <property type="pathway name" value="FBXL7 down-regulates AURKA during mitotic entry and in early mitosis"/>
</dbReference>
<dbReference type="Reactome" id="R-DME-8939236">
    <property type="pathway name" value="RUNX1 regulates transcription of genes involved in differentiation of HSCs"/>
</dbReference>
<dbReference type="Reactome" id="R-DME-8939902">
    <property type="pathway name" value="Regulation of RUNX2 expression and activity"/>
</dbReference>
<dbReference type="Reactome" id="R-DME-8941858">
    <property type="pathway name" value="Regulation of RUNX3 expression and activity"/>
</dbReference>
<dbReference type="Reactome" id="R-DME-8948751">
    <property type="pathway name" value="Regulation of PTEN stability and activity"/>
</dbReference>
<dbReference type="Reactome" id="R-DME-8951664">
    <property type="pathway name" value="Neddylation"/>
</dbReference>
<dbReference type="Reactome" id="R-DME-9020702">
    <property type="pathway name" value="Interleukin-1 signaling"/>
</dbReference>
<dbReference type="Reactome" id="R-DME-9755511">
    <property type="pathway name" value="KEAP1-NFE2L2 pathway"/>
</dbReference>
<dbReference type="Reactome" id="R-DME-9762114">
    <property type="pathway name" value="GSK3B and BTRC:CUL1-mediated-degradation of NFE2L2"/>
</dbReference>
<dbReference type="Reactome" id="R-DME-983168">
    <property type="pathway name" value="Antigen processing: Ubiquitination &amp; Proteasome degradation"/>
</dbReference>
<dbReference type="Reactome" id="R-DME-9907900">
    <property type="pathway name" value="Proteasome assembly"/>
</dbReference>
<dbReference type="BioGRID-ORCS" id="34359">
    <property type="hits" value="1 hit in 1 CRISPR screen"/>
</dbReference>
<dbReference type="GenomeRNAi" id="34359"/>
<dbReference type="PRO" id="PR:P12881"/>
<dbReference type="Proteomes" id="UP000000803">
    <property type="component" value="Chromosome 2L"/>
</dbReference>
<dbReference type="Bgee" id="FBgn0250843">
    <property type="expression patterns" value="Expressed in egg cell and 185 other cell types or tissues"/>
</dbReference>
<dbReference type="ExpressionAtlas" id="P12881">
    <property type="expression patterns" value="baseline and differential"/>
</dbReference>
<dbReference type="GO" id="GO:0005737">
    <property type="term" value="C:cytoplasm"/>
    <property type="evidence" value="ECO:0000314"/>
    <property type="project" value="FlyBase"/>
</dbReference>
<dbReference type="GO" id="GO:0005829">
    <property type="term" value="C:cytosol"/>
    <property type="evidence" value="ECO:0000304"/>
    <property type="project" value="Reactome"/>
</dbReference>
<dbReference type="GO" id="GO:0005654">
    <property type="term" value="C:nucleoplasm"/>
    <property type="evidence" value="ECO:0000304"/>
    <property type="project" value="Reactome"/>
</dbReference>
<dbReference type="GO" id="GO:0005634">
    <property type="term" value="C:nucleus"/>
    <property type="evidence" value="ECO:0000314"/>
    <property type="project" value="FlyBase"/>
</dbReference>
<dbReference type="GO" id="GO:0000502">
    <property type="term" value="C:proteasome complex"/>
    <property type="evidence" value="ECO:0000314"/>
    <property type="project" value="FlyBase"/>
</dbReference>
<dbReference type="GO" id="GO:0019773">
    <property type="term" value="C:proteasome core complex, alpha-subunit complex"/>
    <property type="evidence" value="ECO:0000250"/>
    <property type="project" value="UniProtKB"/>
</dbReference>
<dbReference type="GO" id="GO:0008340">
    <property type="term" value="P:determination of adult lifespan"/>
    <property type="evidence" value="ECO:0000315"/>
    <property type="project" value="FlyBase"/>
</dbReference>
<dbReference type="GO" id="GO:0043161">
    <property type="term" value="P:proteasome-mediated ubiquitin-dependent protein catabolic process"/>
    <property type="evidence" value="ECO:0000318"/>
    <property type="project" value="GO_Central"/>
</dbReference>
<dbReference type="GO" id="GO:0007370">
    <property type="term" value="P:ventral furrow formation"/>
    <property type="evidence" value="ECO:0000315"/>
    <property type="project" value="FlyBase"/>
</dbReference>
<dbReference type="CDD" id="cd03749">
    <property type="entry name" value="proteasome_alpha_type_1"/>
    <property type="match status" value="1"/>
</dbReference>
<dbReference type="FunFam" id="3.60.20.10:FF:000063">
    <property type="entry name" value="Proteasome subunit alpha type"/>
    <property type="match status" value="1"/>
</dbReference>
<dbReference type="Gene3D" id="3.60.20.10">
    <property type="entry name" value="Glutamine Phosphoribosylpyrophosphate, subunit 1, domain 1"/>
    <property type="match status" value="1"/>
</dbReference>
<dbReference type="InterPro" id="IPR029055">
    <property type="entry name" value="Ntn_hydrolases_N"/>
</dbReference>
<dbReference type="InterPro" id="IPR050115">
    <property type="entry name" value="Proteasome_alpha"/>
</dbReference>
<dbReference type="InterPro" id="IPR023332">
    <property type="entry name" value="Proteasome_alpha-type"/>
</dbReference>
<dbReference type="InterPro" id="IPR035144">
    <property type="entry name" value="Proteasome_alpha1"/>
</dbReference>
<dbReference type="InterPro" id="IPR000426">
    <property type="entry name" value="Proteasome_asu_N"/>
</dbReference>
<dbReference type="InterPro" id="IPR001353">
    <property type="entry name" value="Proteasome_sua/b"/>
</dbReference>
<dbReference type="PANTHER" id="PTHR11599">
    <property type="entry name" value="PROTEASOME SUBUNIT ALPHA/BETA"/>
    <property type="match status" value="1"/>
</dbReference>
<dbReference type="Pfam" id="PF00227">
    <property type="entry name" value="Proteasome"/>
    <property type="match status" value="1"/>
</dbReference>
<dbReference type="Pfam" id="PF10584">
    <property type="entry name" value="Proteasome_A_N"/>
    <property type="match status" value="1"/>
</dbReference>
<dbReference type="SMART" id="SM00948">
    <property type="entry name" value="Proteasome_A_N"/>
    <property type="match status" value="1"/>
</dbReference>
<dbReference type="SUPFAM" id="SSF56235">
    <property type="entry name" value="N-terminal nucleophile aminohydrolases (Ntn hydrolases)"/>
    <property type="match status" value="1"/>
</dbReference>
<dbReference type="PROSITE" id="PS00388">
    <property type="entry name" value="PROTEASOME_ALPHA_1"/>
    <property type="match status" value="1"/>
</dbReference>
<dbReference type="PROSITE" id="PS51475">
    <property type="entry name" value="PROTEASOME_ALPHA_2"/>
    <property type="match status" value="1"/>
</dbReference>
<comment type="function">
    <text>The proteasome is a multicatalytic proteinase complex which is characterized by its ability to cleave peptides with Arg, Phe, Tyr, Leu, and Glu adjacent to the leaving group at neutral or slightly basic pH. The proteasome has an ATP-dependent proteolytic activity.</text>
</comment>
<comment type="subunit">
    <text evidence="1 5">The 26S proteasome consists of a 20S proteasome core and two 19S regulatory subunits. The 20S proteasome core is composed of 28 subunits that are arranged in four stacked rings, resulting in a barrel-shaped structure. The two end rings are each formed by seven alpha subunits, and the two central rings are each formed by seven beta subunits. The catalytic chamber with the active sites is on the inside of the barrel (By similarity). Interacts with PI31.</text>
</comment>
<comment type="interaction">
    <interactant intactId="EBI-183209">
        <id>P12881</id>
    </interactant>
    <interactant intactId="EBI-119764">
        <id>Q9XYN7</id>
        <label>Prosbeta3</label>
    </interactant>
    <organismsDiffer>false</organismsDiffer>
    <experiments>3</experiments>
</comment>
<comment type="interaction">
    <interactant intactId="EBI-183209">
        <id>P12881</id>
    </interactant>
    <interactant intactId="EBI-116800">
        <id>Q7K148</id>
        <label>Prosbeta5</label>
    </interactant>
    <organismsDiffer>false</organismsDiffer>
    <experiments>3</experiments>
</comment>
<comment type="interaction">
    <interactant intactId="EBI-183209">
        <id>P12881</id>
    </interactant>
    <interactant intactId="EBI-189117">
        <id>P48601</id>
        <label>Rpt2</label>
    </interactant>
    <organismsDiffer>false</organismsDiffer>
    <experiments>3</experiments>
</comment>
<comment type="subcellular location">
    <subcellularLocation>
        <location evidence="1">Cytoplasm</location>
    </subcellularLocation>
    <subcellularLocation>
        <location evidence="1">Nucleus</location>
    </subcellularLocation>
</comment>
<comment type="similarity">
    <text evidence="3">Belongs to the peptidase T1A family.</text>
</comment>
<sequence length="279" mass="31059">MFRNQYDSDVTVWSPQGRLHQVEYAMEAVKLGTATVGLKNKDYAVLVALCKPTSELSDTQRKIIPIDDHLGISIAGLTADARVLSRYLRSECLNYKHSYDTTYPVSRLITNLGNKMQTTTQRYDRRPYGVGLLVAGYDERGPHIYQVTPSATFFNCKANSIGSRSQSARTYLEKNLNKFLDSSKDEIIRHGIRAILGTLPTDEQGKDAGQYDITVAIVGKDQPFTILSNKDSAKHVAIAKENDNDTPRNDDDDDRPSPPEEPAAGPRDPEVLVATEQRP</sequence>
<reference key="1">
    <citation type="journal article" date="1989" name="EMBO J.">
        <title>The PROS-35 gene encodes the 35 kd protein subunit of Drosophila melanogaster proteasome.</title>
        <authorList>
            <person name="Haass C."/>
            <person name="Pesold-Hurt B."/>
            <person name="Multhaup G."/>
            <person name="Beyreuther K."/>
            <person name="Kloetzel P.-M."/>
        </authorList>
    </citation>
    <scope>NUCLEOTIDE SEQUENCE [MRNA]</scope>
    <scope>PROTEIN SEQUENCE OF 4-18 AND 194-206</scope>
    <source>
        <strain>Oregon-R</strain>
    </source>
</reference>
<reference key="2">
    <citation type="journal article" date="1992" name="Eur. J. Biochem.">
        <title>Molecular characterization of the genomic regions of the Drosophila alpha-type subunit proteasome genes PROS-Dm28.1 and PROS-Dm35.</title>
        <authorList>
            <person name="Frentzel S."/>
            <person name="Troxell M."/>
            <person name="Haass C."/>
            <person name="Pesold-Hurt B."/>
            <person name="Glaetzer K.H."/>
            <person name="Kloetzel P.-M."/>
        </authorList>
    </citation>
    <scope>NUCLEOTIDE SEQUENCE [GENOMIC DNA]</scope>
    <source>
        <strain>Oregon-R</strain>
    </source>
</reference>
<reference key="3">
    <citation type="journal article" date="2000" name="Science">
        <title>The genome sequence of Drosophila melanogaster.</title>
        <authorList>
            <person name="Adams M.D."/>
            <person name="Celniker S.E."/>
            <person name="Holt R.A."/>
            <person name="Evans C.A."/>
            <person name="Gocayne J.D."/>
            <person name="Amanatides P.G."/>
            <person name="Scherer S.E."/>
            <person name="Li P.W."/>
            <person name="Hoskins R.A."/>
            <person name="Galle R.F."/>
            <person name="George R.A."/>
            <person name="Lewis S.E."/>
            <person name="Richards S."/>
            <person name="Ashburner M."/>
            <person name="Henderson S.N."/>
            <person name="Sutton G.G."/>
            <person name="Wortman J.R."/>
            <person name="Yandell M.D."/>
            <person name="Zhang Q."/>
            <person name="Chen L.X."/>
            <person name="Brandon R.C."/>
            <person name="Rogers Y.-H.C."/>
            <person name="Blazej R.G."/>
            <person name="Champe M."/>
            <person name="Pfeiffer B.D."/>
            <person name="Wan K.H."/>
            <person name="Doyle C."/>
            <person name="Baxter E.G."/>
            <person name="Helt G."/>
            <person name="Nelson C.R."/>
            <person name="Miklos G.L.G."/>
            <person name="Abril J.F."/>
            <person name="Agbayani A."/>
            <person name="An H.-J."/>
            <person name="Andrews-Pfannkoch C."/>
            <person name="Baldwin D."/>
            <person name="Ballew R.M."/>
            <person name="Basu A."/>
            <person name="Baxendale J."/>
            <person name="Bayraktaroglu L."/>
            <person name="Beasley E.M."/>
            <person name="Beeson K.Y."/>
            <person name="Benos P.V."/>
            <person name="Berman B.P."/>
            <person name="Bhandari D."/>
            <person name="Bolshakov S."/>
            <person name="Borkova D."/>
            <person name="Botchan M.R."/>
            <person name="Bouck J."/>
            <person name="Brokstein P."/>
            <person name="Brottier P."/>
            <person name="Burtis K.C."/>
            <person name="Busam D.A."/>
            <person name="Butler H."/>
            <person name="Cadieu E."/>
            <person name="Center A."/>
            <person name="Chandra I."/>
            <person name="Cherry J.M."/>
            <person name="Cawley S."/>
            <person name="Dahlke C."/>
            <person name="Davenport L.B."/>
            <person name="Davies P."/>
            <person name="de Pablos B."/>
            <person name="Delcher A."/>
            <person name="Deng Z."/>
            <person name="Mays A.D."/>
            <person name="Dew I."/>
            <person name="Dietz S.M."/>
            <person name="Dodson K."/>
            <person name="Doup L.E."/>
            <person name="Downes M."/>
            <person name="Dugan-Rocha S."/>
            <person name="Dunkov B.C."/>
            <person name="Dunn P."/>
            <person name="Durbin K.J."/>
            <person name="Evangelista C.C."/>
            <person name="Ferraz C."/>
            <person name="Ferriera S."/>
            <person name="Fleischmann W."/>
            <person name="Fosler C."/>
            <person name="Gabrielian A.E."/>
            <person name="Garg N.S."/>
            <person name="Gelbart W.M."/>
            <person name="Glasser K."/>
            <person name="Glodek A."/>
            <person name="Gong F."/>
            <person name="Gorrell J.H."/>
            <person name="Gu Z."/>
            <person name="Guan P."/>
            <person name="Harris M."/>
            <person name="Harris N.L."/>
            <person name="Harvey D.A."/>
            <person name="Heiman T.J."/>
            <person name="Hernandez J.R."/>
            <person name="Houck J."/>
            <person name="Hostin D."/>
            <person name="Houston K.A."/>
            <person name="Howland T.J."/>
            <person name="Wei M.-H."/>
            <person name="Ibegwam C."/>
            <person name="Jalali M."/>
            <person name="Kalush F."/>
            <person name="Karpen G.H."/>
            <person name="Ke Z."/>
            <person name="Kennison J.A."/>
            <person name="Ketchum K.A."/>
            <person name="Kimmel B.E."/>
            <person name="Kodira C.D."/>
            <person name="Kraft C.L."/>
            <person name="Kravitz S."/>
            <person name="Kulp D."/>
            <person name="Lai Z."/>
            <person name="Lasko P."/>
            <person name="Lei Y."/>
            <person name="Levitsky A.A."/>
            <person name="Li J.H."/>
            <person name="Li Z."/>
            <person name="Liang Y."/>
            <person name="Lin X."/>
            <person name="Liu X."/>
            <person name="Mattei B."/>
            <person name="McIntosh T.C."/>
            <person name="McLeod M.P."/>
            <person name="McPherson D."/>
            <person name="Merkulov G."/>
            <person name="Milshina N.V."/>
            <person name="Mobarry C."/>
            <person name="Morris J."/>
            <person name="Moshrefi A."/>
            <person name="Mount S.M."/>
            <person name="Moy M."/>
            <person name="Murphy B."/>
            <person name="Murphy L."/>
            <person name="Muzny D.M."/>
            <person name="Nelson D.L."/>
            <person name="Nelson D.R."/>
            <person name="Nelson K.A."/>
            <person name="Nixon K."/>
            <person name="Nusskern D.R."/>
            <person name="Pacleb J.M."/>
            <person name="Palazzolo M."/>
            <person name="Pittman G.S."/>
            <person name="Pan S."/>
            <person name="Pollard J."/>
            <person name="Puri V."/>
            <person name="Reese M.G."/>
            <person name="Reinert K."/>
            <person name="Remington K."/>
            <person name="Saunders R.D.C."/>
            <person name="Scheeler F."/>
            <person name="Shen H."/>
            <person name="Shue B.C."/>
            <person name="Siden-Kiamos I."/>
            <person name="Simpson M."/>
            <person name="Skupski M.P."/>
            <person name="Smith T.J."/>
            <person name="Spier E."/>
            <person name="Spradling A.C."/>
            <person name="Stapleton M."/>
            <person name="Strong R."/>
            <person name="Sun E."/>
            <person name="Svirskas R."/>
            <person name="Tector C."/>
            <person name="Turner R."/>
            <person name="Venter E."/>
            <person name="Wang A.H."/>
            <person name="Wang X."/>
            <person name="Wang Z.-Y."/>
            <person name="Wassarman D.A."/>
            <person name="Weinstock G.M."/>
            <person name="Weissenbach J."/>
            <person name="Williams S.M."/>
            <person name="Woodage T."/>
            <person name="Worley K.C."/>
            <person name="Wu D."/>
            <person name="Yang S."/>
            <person name="Yao Q.A."/>
            <person name="Ye J."/>
            <person name="Yeh R.-F."/>
            <person name="Zaveri J.S."/>
            <person name="Zhan M."/>
            <person name="Zhang G."/>
            <person name="Zhao Q."/>
            <person name="Zheng L."/>
            <person name="Zheng X.H."/>
            <person name="Zhong F.N."/>
            <person name="Zhong W."/>
            <person name="Zhou X."/>
            <person name="Zhu S.C."/>
            <person name="Zhu X."/>
            <person name="Smith H.O."/>
            <person name="Gibbs R.A."/>
            <person name="Myers E.W."/>
            <person name="Rubin G.M."/>
            <person name="Venter J.C."/>
        </authorList>
    </citation>
    <scope>NUCLEOTIDE SEQUENCE [LARGE SCALE GENOMIC DNA]</scope>
    <source>
        <strain>Berkeley</strain>
    </source>
</reference>
<reference key="4">
    <citation type="journal article" date="2002" name="Genome Biol.">
        <title>Annotation of the Drosophila melanogaster euchromatic genome: a systematic review.</title>
        <authorList>
            <person name="Misra S."/>
            <person name="Crosby M.A."/>
            <person name="Mungall C.J."/>
            <person name="Matthews B.B."/>
            <person name="Campbell K.S."/>
            <person name="Hradecky P."/>
            <person name="Huang Y."/>
            <person name="Kaminker J.S."/>
            <person name="Millburn G.H."/>
            <person name="Prochnik S.E."/>
            <person name="Smith C.D."/>
            <person name="Tupy J.L."/>
            <person name="Whitfield E.J."/>
            <person name="Bayraktaroglu L."/>
            <person name="Berman B.P."/>
            <person name="Bettencourt B.R."/>
            <person name="Celniker S.E."/>
            <person name="de Grey A.D.N.J."/>
            <person name="Drysdale R.A."/>
            <person name="Harris N.L."/>
            <person name="Richter J."/>
            <person name="Russo S."/>
            <person name="Schroeder A.J."/>
            <person name="Shu S.Q."/>
            <person name="Stapleton M."/>
            <person name="Yamada C."/>
            <person name="Ashburner M."/>
            <person name="Gelbart W.M."/>
            <person name="Rubin G.M."/>
            <person name="Lewis S.E."/>
        </authorList>
    </citation>
    <scope>GENOME REANNOTATION</scope>
    <source>
        <strain>Berkeley</strain>
    </source>
</reference>
<reference key="5">
    <citation type="journal article" date="2002" name="Genome Biol.">
        <title>A Drosophila full-length cDNA resource.</title>
        <authorList>
            <person name="Stapleton M."/>
            <person name="Carlson J.W."/>
            <person name="Brokstein P."/>
            <person name="Yu C."/>
            <person name="Champe M."/>
            <person name="George R.A."/>
            <person name="Guarin H."/>
            <person name="Kronmiller B."/>
            <person name="Pacleb J.M."/>
            <person name="Park S."/>
            <person name="Wan K.H."/>
            <person name="Rubin G.M."/>
            <person name="Celniker S.E."/>
        </authorList>
    </citation>
    <scope>NUCLEOTIDE SEQUENCE [LARGE SCALE MRNA]</scope>
    <source>
        <strain>Berkeley</strain>
        <tissue>Embryo</tissue>
    </source>
</reference>
<reference key="6">
    <citation type="journal article" date="2013" name="Cell">
        <title>Proteasome regulation by ADP-ribosylation.</title>
        <authorList>
            <person name="Cho-Park P.F."/>
            <person name="Steller H."/>
        </authorList>
    </citation>
    <scope>INTERACTION WITH PI31</scope>
</reference>
<keyword id="KW-0963">Cytoplasm</keyword>
<keyword id="KW-0903">Direct protein sequencing</keyword>
<keyword id="KW-0539">Nucleus</keyword>
<keyword id="KW-0597">Phosphoprotein</keyword>
<keyword id="KW-0647">Proteasome</keyword>
<keyword id="KW-1185">Reference proteome</keyword>
<accession>P12881</accession>
<accession>Q8SZ22</accession>
<accession>Q9VL23</accession>
<gene>
    <name type="primary">Prosalpha6</name>
    <name type="synonym">PROS-35</name>
    <name type="synonym">Pros35</name>
    <name type="ORF">CG4904</name>
</gene>
<organism>
    <name type="scientific">Drosophila melanogaster</name>
    <name type="common">Fruit fly</name>
    <dbReference type="NCBI Taxonomy" id="7227"/>
    <lineage>
        <taxon>Eukaryota</taxon>
        <taxon>Metazoa</taxon>
        <taxon>Ecdysozoa</taxon>
        <taxon>Arthropoda</taxon>
        <taxon>Hexapoda</taxon>
        <taxon>Insecta</taxon>
        <taxon>Pterygota</taxon>
        <taxon>Neoptera</taxon>
        <taxon>Endopterygota</taxon>
        <taxon>Diptera</taxon>
        <taxon>Brachycera</taxon>
        <taxon>Muscomorpha</taxon>
        <taxon>Ephydroidea</taxon>
        <taxon>Drosophilidae</taxon>
        <taxon>Drosophila</taxon>
        <taxon>Sophophora</taxon>
    </lineage>
</organism>
<feature type="chain" id="PRO_0000124068" description="Proteasome subunit alpha type-1">
    <location>
        <begin position="1"/>
        <end position="279"/>
    </location>
</feature>
<feature type="region of interest" description="Disordered" evidence="4">
    <location>
        <begin position="235"/>
        <end position="279"/>
    </location>
</feature>
<feature type="compositionally biased region" description="Basic and acidic residues" evidence="4">
    <location>
        <begin position="235"/>
        <end position="249"/>
    </location>
</feature>
<feature type="modified residue" description="Phosphotyrosine" evidence="2">
    <location>
        <position position="103"/>
    </location>
</feature>
<feature type="sequence conflict" description="In Ref. 5; AAL48800." evidence="6" ref="5">
    <original>R</original>
    <variation>H</variation>
    <location>
        <position position="189"/>
    </location>
</feature>
<proteinExistence type="evidence at protein level"/>
<evidence type="ECO:0000250" key="1"/>
<evidence type="ECO:0000255" key="2"/>
<evidence type="ECO:0000255" key="3">
    <source>
        <dbReference type="PROSITE-ProRule" id="PRU00808"/>
    </source>
</evidence>
<evidence type="ECO:0000256" key="4">
    <source>
        <dbReference type="SAM" id="MobiDB-lite"/>
    </source>
</evidence>
<evidence type="ECO:0000269" key="5">
    <source>
    </source>
</evidence>
<evidence type="ECO:0000305" key="6"/>
<protein>
    <recommendedName>
        <fullName>Proteasome subunit alpha type-1</fullName>
    </recommendedName>
    <alternativeName>
        <fullName>PROS-Dm35</fullName>
    </alternativeName>
    <alternativeName>
        <fullName>Proteasome 35 kDa subunit</fullName>
    </alternativeName>
</protein>
<name>PSA1_DROME</name>